<comment type="function">
    <text evidence="1">Accessory protein involved in autophagy. Acts as a scaffold protein of the ATG1-ATG13 complex for faithful delivery of autophagic vesicles to the vacuole. Required for selective mitophagy.</text>
</comment>
<comment type="subunit">
    <text evidence="3">Interacts with ATG11 and ATG13A.</text>
</comment>
<comment type="subcellular location">
    <subcellularLocation>
        <location evidence="3">Cytoplasmic vesicle</location>
        <location evidence="3">Autophagosome</location>
    </subcellularLocation>
</comment>
<comment type="alternative products">
    <event type="alternative splicing"/>
    <isoform>
        <id>F4K265-1</id>
        <name>1</name>
        <sequence type="displayed"/>
    </isoform>
    <isoform>
        <id>F4K265-2</id>
        <name>2</name>
        <sequence type="described" ref="VSP_057968 VSP_057969"/>
    </isoform>
</comment>
<comment type="similarity">
    <text evidence="5">Belongs to the ATG101 family.</text>
</comment>
<comment type="sequence caution" evidence="5">
    <conflict type="erroneous gene model prediction">
        <sequence resource="EMBL-CDS" id="BAB08635"/>
    </conflict>
</comment>
<comment type="sequence caution" evidence="5">
    <conflict type="frameshift">
        <sequence resource="EMBL" id="BX833047"/>
    </conflict>
</comment>
<organism>
    <name type="scientific">Arabidopsis thaliana</name>
    <name type="common">Mouse-ear cress</name>
    <dbReference type="NCBI Taxonomy" id="3702"/>
    <lineage>
        <taxon>Eukaryota</taxon>
        <taxon>Viridiplantae</taxon>
        <taxon>Streptophyta</taxon>
        <taxon>Embryophyta</taxon>
        <taxon>Tracheophyta</taxon>
        <taxon>Spermatophyta</taxon>
        <taxon>Magnoliopsida</taxon>
        <taxon>eudicotyledons</taxon>
        <taxon>Gunneridae</taxon>
        <taxon>Pentapetalae</taxon>
        <taxon>rosids</taxon>
        <taxon>malvids</taxon>
        <taxon>Brassicales</taxon>
        <taxon>Brassicaceae</taxon>
        <taxon>Camelineae</taxon>
        <taxon>Arabidopsis</taxon>
    </lineage>
</organism>
<dbReference type="EMBL" id="AB010700">
    <property type="protein sequence ID" value="BAB08635.1"/>
    <property type="status" value="ALT_SEQ"/>
    <property type="molecule type" value="Genomic_DNA"/>
</dbReference>
<dbReference type="EMBL" id="CP002688">
    <property type="protein sequence ID" value="AED98279.1"/>
    <property type="molecule type" value="Genomic_DNA"/>
</dbReference>
<dbReference type="EMBL" id="CP002688">
    <property type="protein sequence ID" value="AED98280.1"/>
    <property type="molecule type" value="Genomic_DNA"/>
</dbReference>
<dbReference type="EMBL" id="AY056211">
    <property type="protein sequence ID" value="AAL07060.1"/>
    <property type="molecule type" value="mRNA"/>
</dbReference>
<dbReference type="EMBL" id="BT002759">
    <property type="protein sequence ID" value="AAO22587.1"/>
    <property type="molecule type" value="mRNA"/>
</dbReference>
<dbReference type="EMBL" id="BX833047">
    <property type="status" value="NOT_ANNOTATED_CDS"/>
    <property type="molecule type" value="mRNA"/>
</dbReference>
<dbReference type="RefSeq" id="NP_569042.2">
    <molecule id="F4K265-1"/>
    <property type="nucleotide sequence ID" value="NM_126092.5"/>
</dbReference>
<dbReference type="RefSeq" id="NP_851284.1">
    <molecule id="F4K265-2"/>
    <property type="nucleotide sequence ID" value="NM_180953.2"/>
</dbReference>
<dbReference type="SMR" id="F4K265"/>
<dbReference type="FunCoup" id="F4K265">
    <property type="interactions" value="2354"/>
</dbReference>
<dbReference type="IntAct" id="F4K265">
    <property type="interactions" value="1"/>
</dbReference>
<dbReference type="STRING" id="3702.F4K265"/>
<dbReference type="iPTMnet" id="F4K265"/>
<dbReference type="PaxDb" id="3702-AT5G66930.3"/>
<dbReference type="ProteomicsDB" id="246522">
    <molecule id="F4K265-1"/>
</dbReference>
<dbReference type="EnsemblPlants" id="AT5G66930.1">
    <molecule id="F4K265-2"/>
    <property type="protein sequence ID" value="AT5G66930.1"/>
    <property type="gene ID" value="AT5G66930"/>
</dbReference>
<dbReference type="EnsemblPlants" id="AT5G66930.2">
    <molecule id="F4K265-1"/>
    <property type="protein sequence ID" value="AT5G66930.2"/>
    <property type="gene ID" value="AT5G66930"/>
</dbReference>
<dbReference type="GeneID" id="836827"/>
<dbReference type="Gramene" id="AT5G66930.1">
    <molecule id="F4K265-2"/>
    <property type="protein sequence ID" value="AT5G66930.1"/>
    <property type="gene ID" value="AT5G66930"/>
</dbReference>
<dbReference type="Gramene" id="AT5G66930.2">
    <molecule id="F4K265-1"/>
    <property type="protein sequence ID" value="AT5G66930.2"/>
    <property type="gene ID" value="AT5G66930"/>
</dbReference>
<dbReference type="KEGG" id="ath:AT5G66930"/>
<dbReference type="Araport" id="AT5G66930"/>
<dbReference type="TAIR" id="AT5G66930">
    <property type="gene designation" value="ATG101"/>
</dbReference>
<dbReference type="eggNOG" id="KOG4493">
    <property type="taxonomic scope" value="Eukaryota"/>
</dbReference>
<dbReference type="HOGENOM" id="CLU_069661_0_0_1"/>
<dbReference type="InParanoid" id="F4K265"/>
<dbReference type="OMA" id="VCWEIWT"/>
<dbReference type="OrthoDB" id="10259639at2759"/>
<dbReference type="PRO" id="PR:F4K265"/>
<dbReference type="Proteomes" id="UP000006548">
    <property type="component" value="Chromosome 5"/>
</dbReference>
<dbReference type="ExpressionAtlas" id="F4K265">
    <property type="expression patterns" value="baseline and differential"/>
</dbReference>
<dbReference type="GO" id="GO:0005776">
    <property type="term" value="C:autophagosome"/>
    <property type="evidence" value="ECO:0007669"/>
    <property type="project" value="UniProtKB-SubCell"/>
</dbReference>
<dbReference type="GO" id="GO:0031410">
    <property type="term" value="C:cytoplasmic vesicle"/>
    <property type="evidence" value="ECO:0007669"/>
    <property type="project" value="UniProtKB-KW"/>
</dbReference>
<dbReference type="GO" id="GO:0006914">
    <property type="term" value="P:autophagy"/>
    <property type="evidence" value="ECO:0007669"/>
    <property type="project" value="UniProtKB-KW"/>
</dbReference>
<dbReference type="GO" id="GO:0015031">
    <property type="term" value="P:protein transport"/>
    <property type="evidence" value="ECO:0007669"/>
    <property type="project" value="UniProtKB-KW"/>
</dbReference>
<dbReference type="InterPro" id="IPR012445">
    <property type="entry name" value="ATG101"/>
</dbReference>
<dbReference type="PANTHER" id="PTHR13292">
    <property type="entry name" value="AUTOPHAGY-RELATED PROTEIN 101"/>
    <property type="match status" value="1"/>
</dbReference>
<dbReference type="PANTHER" id="PTHR13292:SF0">
    <property type="entry name" value="AUTOPHAGY-RELATED PROTEIN 101"/>
    <property type="match status" value="1"/>
</dbReference>
<dbReference type="Pfam" id="PF07855">
    <property type="entry name" value="ATG101"/>
    <property type="match status" value="1"/>
</dbReference>
<proteinExistence type="evidence at protein level"/>
<gene>
    <name evidence="4" type="primary">ATG101</name>
    <name evidence="6" type="ordered locus">At5g66930</name>
    <name evidence="7" type="ORF">MUD21.19</name>
</gene>
<sequence length="215" mass="25278">MNCEVCQLKELEVESFEIREVLRCILHTIVFHRALGLIRPKDIDLELFEITYVQCGEIEVEKKIDEKIEQFINWIEKHPNKKSQICLSFYEVKSKQPSWFTKIERLYWEQWYINLNVLQPTKPPVGKSHHSKLVMDPGEASEERSSRRTLLEQSLQEVLFQIIKFVNEKKDHVPPINDGVIYYPFEITIPSSSDSAFGMDMFKRILHSGHPSMLG</sequence>
<accession>F4K265</accession>
<accession>Q84WU3</accession>
<accession>Q93ZX0</accession>
<accession>Q9FKY8</accession>
<reference key="1">
    <citation type="journal article" date="1998" name="DNA Res.">
        <title>Structural analysis of Arabidopsis thaliana chromosome 5. V. Sequence features of the regions of 1,381,565 bp covered by twenty one physically assigned P1 and TAC clones.</title>
        <authorList>
            <person name="Kaneko T."/>
            <person name="Kotani H."/>
            <person name="Nakamura Y."/>
            <person name="Sato S."/>
            <person name="Asamizu E."/>
            <person name="Miyajima N."/>
            <person name="Tabata S."/>
        </authorList>
    </citation>
    <scope>NUCLEOTIDE SEQUENCE [LARGE SCALE GENOMIC DNA]</scope>
    <source>
        <strain>cv. Columbia</strain>
    </source>
</reference>
<reference key="2">
    <citation type="journal article" date="2017" name="Plant J.">
        <title>Araport11: a complete reannotation of the Arabidopsis thaliana reference genome.</title>
        <authorList>
            <person name="Cheng C.Y."/>
            <person name="Krishnakumar V."/>
            <person name="Chan A.P."/>
            <person name="Thibaud-Nissen F."/>
            <person name="Schobel S."/>
            <person name="Town C.D."/>
        </authorList>
    </citation>
    <scope>GENOME REANNOTATION</scope>
    <source>
        <strain>cv. Columbia</strain>
    </source>
</reference>
<reference key="3">
    <citation type="journal article" date="2003" name="Science">
        <title>Empirical analysis of transcriptional activity in the Arabidopsis genome.</title>
        <authorList>
            <person name="Yamada K."/>
            <person name="Lim J."/>
            <person name="Dale J.M."/>
            <person name="Chen H."/>
            <person name="Shinn P."/>
            <person name="Palm C.J."/>
            <person name="Southwick A.M."/>
            <person name="Wu H.C."/>
            <person name="Kim C.J."/>
            <person name="Nguyen M."/>
            <person name="Pham P.K."/>
            <person name="Cheuk R.F."/>
            <person name="Karlin-Newmann G."/>
            <person name="Liu S.X."/>
            <person name="Lam B."/>
            <person name="Sakano H."/>
            <person name="Wu T."/>
            <person name="Yu G."/>
            <person name="Miranda M."/>
            <person name="Quach H.L."/>
            <person name="Tripp M."/>
            <person name="Chang C.H."/>
            <person name="Lee J.M."/>
            <person name="Toriumi M.J."/>
            <person name="Chan M.M."/>
            <person name="Tang C.C."/>
            <person name="Onodera C.S."/>
            <person name="Deng J.M."/>
            <person name="Akiyama K."/>
            <person name="Ansari Y."/>
            <person name="Arakawa T."/>
            <person name="Banh J."/>
            <person name="Banno F."/>
            <person name="Bowser L."/>
            <person name="Brooks S.Y."/>
            <person name="Carninci P."/>
            <person name="Chao Q."/>
            <person name="Choy N."/>
            <person name="Enju A."/>
            <person name="Goldsmith A.D."/>
            <person name="Gurjal M."/>
            <person name="Hansen N.F."/>
            <person name="Hayashizaki Y."/>
            <person name="Johnson-Hopson C."/>
            <person name="Hsuan V.W."/>
            <person name="Iida K."/>
            <person name="Karnes M."/>
            <person name="Khan S."/>
            <person name="Koesema E."/>
            <person name="Ishida J."/>
            <person name="Jiang P.X."/>
            <person name="Jones T."/>
            <person name="Kawai J."/>
            <person name="Kamiya A."/>
            <person name="Meyers C."/>
            <person name="Nakajima M."/>
            <person name="Narusaka M."/>
            <person name="Seki M."/>
            <person name="Sakurai T."/>
            <person name="Satou M."/>
            <person name="Tamse R."/>
            <person name="Vaysberg M."/>
            <person name="Wallender E.K."/>
            <person name="Wong C."/>
            <person name="Yamamura Y."/>
            <person name="Yuan S."/>
            <person name="Shinozaki K."/>
            <person name="Davis R.W."/>
            <person name="Theologis A."/>
            <person name="Ecker J.R."/>
        </authorList>
    </citation>
    <scope>NUCLEOTIDE SEQUENCE [LARGE SCALE MRNA] (ISOFORM 2)</scope>
    <source>
        <strain>cv. Columbia</strain>
    </source>
</reference>
<reference key="4">
    <citation type="journal article" date="2004" name="Genome Res.">
        <title>Whole genome sequence comparisons and 'full-length' cDNA sequences: a combined approach to evaluate and improve Arabidopsis genome annotation.</title>
        <authorList>
            <person name="Castelli V."/>
            <person name="Aury J.-M."/>
            <person name="Jaillon O."/>
            <person name="Wincker P."/>
            <person name="Clepet C."/>
            <person name="Menard M."/>
            <person name="Cruaud C."/>
            <person name="Quetier F."/>
            <person name="Scarpelli C."/>
            <person name="Schaechter V."/>
            <person name="Temple G."/>
            <person name="Caboche M."/>
            <person name="Weissenbach J."/>
            <person name="Salanoubat M."/>
        </authorList>
    </citation>
    <scope>NUCLEOTIDE SEQUENCE [LARGE SCALE MRNA] (ISOFORM 1)</scope>
    <source>
        <strain>cv. Columbia</strain>
    </source>
</reference>
<reference key="5">
    <citation type="journal article" date="2014" name="Plant Cell">
        <title>AUTOPHAGY-RELATED11 plays a critical role in general autophagy- and senescence-induced mitophagy in Arabidopsis.</title>
        <authorList>
            <person name="Li F."/>
            <person name="Chung T."/>
            <person name="Vierstra R.D."/>
        </authorList>
    </citation>
    <scope>INTERACTION WITH ATG11 AND ATG13A</scope>
    <scope>SUBCELLULAR LOCATION</scope>
</reference>
<evidence type="ECO:0000250" key="1">
    <source>
        <dbReference type="UniProtKB" id="Q9SUG7"/>
    </source>
</evidence>
<evidence type="ECO:0000256" key="2">
    <source>
        <dbReference type="SAM" id="MobiDB-lite"/>
    </source>
</evidence>
<evidence type="ECO:0000269" key="3">
    <source>
    </source>
</evidence>
<evidence type="ECO:0000303" key="4">
    <source>
    </source>
</evidence>
<evidence type="ECO:0000305" key="5"/>
<evidence type="ECO:0000312" key="6">
    <source>
        <dbReference type="Araport" id="AT5G66930"/>
    </source>
</evidence>
<evidence type="ECO:0000312" key="7">
    <source>
        <dbReference type="EMBL" id="BAB08635.1"/>
    </source>
</evidence>
<name>AT101_ARATH</name>
<keyword id="KW-0025">Alternative splicing</keyword>
<keyword id="KW-0072">Autophagy</keyword>
<keyword id="KW-0968">Cytoplasmic vesicle</keyword>
<keyword id="KW-0653">Protein transport</keyword>
<keyword id="KW-1185">Reference proteome</keyword>
<keyword id="KW-0813">Transport</keyword>
<feature type="chain" id="PRO_0000434629" description="Autophagy-related protein 101">
    <location>
        <begin position="1"/>
        <end position="215"/>
    </location>
</feature>
<feature type="region of interest" description="Disordered" evidence="2">
    <location>
        <begin position="124"/>
        <end position="147"/>
    </location>
</feature>
<feature type="splice variant" id="VSP_057968" description="In isoform 2.">
    <original>EASEERSSRRTLLEQSLQE</original>
    <variation>GSIDQFPVLISKNYIFLLL</variation>
    <location>
        <begin position="139"/>
        <end position="157"/>
    </location>
</feature>
<feature type="splice variant" id="VSP_057969" description="In isoform 2.">
    <location>
        <begin position="158"/>
        <end position="215"/>
    </location>
</feature>
<feature type="sequence conflict" description="In Ref. 3; AAL07060." evidence="5" ref="3">
    <original>K</original>
    <variation>E</variation>
    <location>
        <position position="82"/>
    </location>
</feature>
<protein>
    <recommendedName>
        <fullName evidence="4">Autophagy-related protein 101</fullName>
    </recommendedName>
</protein>